<sequence>MARQGTIHRVTGETDVKVRLDLDGSGQCQASTGVPFLDHMLHQISSHGLIDLEINAVGDTHIDDHHTNEDVGIAVGQALAQALGDRRGIHRFGHFVAPLDEALVQVALDCSGRPHLSYSLAIPSQRIGTYDTELVKEFFVAVVNNSGLTLHIRQLDGVNSHHIVEACFKAFARALRMATEVDPRRAGAIPSSKGVLEQAGAS</sequence>
<dbReference type="EC" id="4.2.1.19" evidence="1"/>
<dbReference type="EMBL" id="CP000110">
    <property type="protein sequence ID" value="ABB33996.1"/>
    <property type="molecule type" value="Genomic_DNA"/>
</dbReference>
<dbReference type="RefSeq" id="WP_011363251.1">
    <property type="nucleotide sequence ID" value="NC_007516.1"/>
</dbReference>
<dbReference type="SMR" id="Q3AN36"/>
<dbReference type="STRING" id="110662.Syncc9605_0220"/>
<dbReference type="KEGG" id="syd:Syncc9605_0220"/>
<dbReference type="eggNOG" id="COG0131">
    <property type="taxonomic scope" value="Bacteria"/>
</dbReference>
<dbReference type="HOGENOM" id="CLU_044308_3_0_3"/>
<dbReference type="OrthoDB" id="9790411at2"/>
<dbReference type="UniPathway" id="UPA00031">
    <property type="reaction ID" value="UER00011"/>
</dbReference>
<dbReference type="GO" id="GO:0005737">
    <property type="term" value="C:cytoplasm"/>
    <property type="evidence" value="ECO:0007669"/>
    <property type="project" value="UniProtKB-SubCell"/>
</dbReference>
<dbReference type="GO" id="GO:0004424">
    <property type="term" value="F:imidazoleglycerol-phosphate dehydratase activity"/>
    <property type="evidence" value="ECO:0007669"/>
    <property type="project" value="UniProtKB-UniRule"/>
</dbReference>
<dbReference type="GO" id="GO:0000105">
    <property type="term" value="P:L-histidine biosynthetic process"/>
    <property type="evidence" value="ECO:0007669"/>
    <property type="project" value="UniProtKB-UniRule"/>
</dbReference>
<dbReference type="CDD" id="cd07914">
    <property type="entry name" value="IGPD"/>
    <property type="match status" value="1"/>
</dbReference>
<dbReference type="FunFam" id="3.30.230.40:FF:000002">
    <property type="entry name" value="Imidazoleglycerol-phosphate dehydratase"/>
    <property type="match status" value="1"/>
</dbReference>
<dbReference type="FunFam" id="3.30.230.40:FF:000003">
    <property type="entry name" value="Imidazoleglycerol-phosphate dehydratase HisB"/>
    <property type="match status" value="1"/>
</dbReference>
<dbReference type="Gene3D" id="3.30.230.40">
    <property type="entry name" value="Imidazole glycerol phosphate dehydratase, domain 1"/>
    <property type="match status" value="2"/>
</dbReference>
<dbReference type="HAMAP" id="MF_00076">
    <property type="entry name" value="HisB"/>
    <property type="match status" value="1"/>
</dbReference>
<dbReference type="InterPro" id="IPR038494">
    <property type="entry name" value="IGPD_sf"/>
</dbReference>
<dbReference type="InterPro" id="IPR000807">
    <property type="entry name" value="ImidazoleglycerolP_deHydtase"/>
</dbReference>
<dbReference type="InterPro" id="IPR020565">
    <property type="entry name" value="ImidazoleglycerP_deHydtase_CS"/>
</dbReference>
<dbReference type="InterPro" id="IPR020568">
    <property type="entry name" value="Ribosomal_Su5_D2-typ_SF"/>
</dbReference>
<dbReference type="NCBIfam" id="NF002108">
    <property type="entry name" value="PRK00951.1-3"/>
    <property type="match status" value="1"/>
</dbReference>
<dbReference type="NCBIfam" id="NF002109">
    <property type="entry name" value="PRK00951.1-5"/>
    <property type="match status" value="1"/>
</dbReference>
<dbReference type="NCBIfam" id="NF002111">
    <property type="entry name" value="PRK00951.2-1"/>
    <property type="match status" value="1"/>
</dbReference>
<dbReference type="NCBIfam" id="NF002114">
    <property type="entry name" value="PRK00951.2-4"/>
    <property type="match status" value="1"/>
</dbReference>
<dbReference type="PANTHER" id="PTHR23133:SF2">
    <property type="entry name" value="IMIDAZOLEGLYCEROL-PHOSPHATE DEHYDRATASE"/>
    <property type="match status" value="1"/>
</dbReference>
<dbReference type="PANTHER" id="PTHR23133">
    <property type="entry name" value="IMIDAZOLEGLYCEROL-PHOSPHATE DEHYDRATASE HIS7"/>
    <property type="match status" value="1"/>
</dbReference>
<dbReference type="Pfam" id="PF00475">
    <property type="entry name" value="IGPD"/>
    <property type="match status" value="1"/>
</dbReference>
<dbReference type="SUPFAM" id="SSF54211">
    <property type="entry name" value="Ribosomal protein S5 domain 2-like"/>
    <property type="match status" value="2"/>
</dbReference>
<dbReference type="PROSITE" id="PS00954">
    <property type="entry name" value="IGP_DEHYDRATASE_1"/>
    <property type="match status" value="1"/>
</dbReference>
<dbReference type="PROSITE" id="PS00955">
    <property type="entry name" value="IGP_DEHYDRATASE_2"/>
    <property type="match status" value="1"/>
</dbReference>
<proteinExistence type="inferred from homology"/>
<evidence type="ECO:0000255" key="1">
    <source>
        <dbReference type="HAMAP-Rule" id="MF_00076"/>
    </source>
</evidence>
<organism>
    <name type="scientific">Synechococcus sp. (strain CC9605)</name>
    <dbReference type="NCBI Taxonomy" id="110662"/>
    <lineage>
        <taxon>Bacteria</taxon>
        <taxon>Bacillati</taxon>
        <taxon>Cyanobacteriota</taxon>
        <taxon>Cyanophyceae</taxon>
        <taxon>Synechococcales</taxon>
        <taxon>Synechococcaceae</taxon>
        <taxon>Synechococcus</taxon>
    </lineage>
</organism>
<comment type="catalytic activity">
    <reaction evidence="1">
        <text>D-erythro-1-(imidazol-4-yl)glycerol 3-phosphate = 3-(imidazol-4-yl)-2-oxopropyl phosphate + H2O</text>
        <dbReference type="Rhea" id="RHEA:11040"/>
        <dbReference type="ChEBI" id="CHEBI:15377"/>
        <dbReference type="ChEBI" id="CHEBI:57766"/>
        <dbReference type="ChEBI" id="CHEBI:58278"/>
        <dbReference type="EC" id="4.2.1.19"/>
    </reaction>
</comment>
<comment type="pathway">
    <text evidence="1">Amino-acid biosynthesis; L-histidine biosynthesis; L-histidine from 5-phospho-alpha-D-ribose 1-diphosphate: step 6/9.</text>
</comment>
<comment type="subcellular location">
    <subcellularLocation>
        <location evidence="1">Cytoplasm</location>
    </subcellularLocation>
</comment>
<comment type="similarity">
    <text evidence="1">Belongs to the imidazoleglycerol-phosphate dehydratase family.</text>
</comment>
<name>HIS7_SYNSC</name>
<protein>
    <recommendedName>
        <fullName evidence="1">Imidazoleglycerol-phosphate dehydratase</fullName>
        <shortName evidence="1">IGPD</shortName>
        <ecNumber evidence="1">4.2.1.19</ecNumber>
    </recommendedName>
</protein>
<feature type="chain" id="PRO_1000010365" description="Imidazoleglycerol-phosphate dehydratase">
    <location>
        <begin position="1"/>
        <end position="202"/>
    </location>
</feature>
<gene>
    <name evidence="1" type="primary">hisB</name>
    <name type="ordered locus">Syncc9605_0220</name>
</gene>
<keyword id="KW-0028">Amino-acid biosynthesis</keyword>
<keyword id="KW-0963">Cytoplasm</keyword>
<keyword id="KW-0368">Histidine biosynthesis</keyword>
<keyword id="KW-0456">Lyase</keyword>
<reference key="1">
    <citation type="submission" date="2005-07" db="EMBL/GenBank/DDBJ databases">
        <title>Complete sequence of Synechococcus sp. CC9605.</title>
        <authorList>
            <consortium name="US DOE Joint Genome Institute"/>
            <person name="Copeland A."/>
            <person name="Lucas S."/>
            <person name="Lapidus A."/>
            <person name="Barry K."/>
            <person name="Detter J.C."/>
            <person name="Glavina T."/>
            <person name="Hammon N."/>
            <person name="Israni S."/>
            <person name="Pitluck S."/>
            <person name="Schmutz J."/>
            <person name="Martinez M."/>
            <person name="Larimer F."/>
            <person name="Land M."/>
            <person name="Kyrpides N."/>
            <person name="Ivanova N."/>
            <person name="Richardson P."/>
        </authorList>
    </citation>
    <scope>NUCLEOTIDE SEQUENCE [LARGE SCALE GENOMIC DNA]</scope>
    <source>
        <strain>CC9605</strain>
    </source>
</reference>
<accession>Q3AN36</accession>